<evidence type="ECO:0000255" key="1">
    <source>
        <dbReference type="HAMAP-Rule" id="MF_04066"/>
    </source>
</evidence>
<evidence type="ECO:0000256" key="2">
    <source>
        <dbReference type="SAM" id="MobiDB-lite"/>
    </source>
</evidence>
<protein>
    <recommendedName>
        <fullName evidence="1">Non-structural protein 1</fullName>
        <shortName evidence="1">NS1</shortName>
    </recommendedName>
    <alternativeName>
        <fullName evidence="1">NS1A</fullName>
    </alternativeName>
</protein>
<name>NS1_I86A3</name>
<organism>
    <name type="scientific">Influenza A virus (strain A/Equine/Tennessee/5/1986 H3N8)</name>
    <dbReference type="NCBI Taxonomy" id="380339"/>
    <lineage>
        <taxon>Viruses</taxon>
        <taxon>Riboviria</taxon>
        <taxon>Orthornavirae</taxon>
        <taxon>Negarnaviricota</taxon>
        <taxon>Polyploviricotina</taxon>
        <taxon>Insthoviricetes</taxon>
        <taxon>Articulavirales</taxon>
        <taxon>Orthomyxoviridae</taxon>
        <taxon>Alphainfluenzavirus</taxon>
        <taxon>Alphainfluenzavirus influenzae</taxon>
        <taxon>Influenza A virus</taxon>
    </lineage>
</organism>
<feature type="chain" id="PRO_0000324277" description="Non-structural protein 1">
    <location>
        <begin position="1"/>
        <end position="230"/>
    </location>
</feature>
<feature type="region of interest" description="RNA-binding and homodimerization" evidence="1">
    <location>
        <begin position="1"/>
        <end position="73"/>
    </location>
</feature>
<feature type="region of interest" description="CPSF4-binding" evidence="1">
    <location>
        <begin position="180"/>
        <end position="215"/>
    </location>
</feature>
<feature type="region of interest" description="Disordered" evidence="2">
    <location>
        <begin position="205"/>
        <end position="230"/>
    </location>
</feature>
<feature type="region of interest" description="PABPN1-binding" evidence="1">
    <location>
        <begin position="223"/>
        <end position="230"/>
    </location>
</feature>
<feature type="short sequence motif" description="Nuclear localization signal" evidence="1">
    <location>
        <begin position="34"/>
        <end position="38"/>
    </location>
</feature>
<feature type="short sequence motif" description="Nuclear export signal" evidence="1">
    <location>
        <begin position="137"/>
        <end position="146"/>
    </location>
</feature>
<reference key="1">
    <citation type="journal article" date="1996" name="J. Virol.">
        <title>Emergence of avian H1N1 influenza viruses in pigs in China.</title>
        <authorList>
            <person name="Guan Y."/>
            <person name="Shortridge K.F."/>
            <person name="Krauss S."/>
            <person name="Li P.H."/>
            <person name="Kawaoka Y."/>
            <person name="Webster R.G."/>
        </authorList>
    </citation>
    <scope>NUCLEOTIDE SEQUENCE [GENOMIC RNA] OF 4-230</scope>
</reference>
<reference key="2">
    <citation type="journal article" date="1998" name="Virus Res.">
        <title>Influence of host species on the evolution of the nonstructural (NS) gene of influenza A viruses.</title>
        <authorList>
            <person name="Kawaoka Y."/>
            <person name="Gorman O.T."/>
            <person name="Ito T."/>
            <person name="Wells K."/>
            <person name="Donis R.O."/>
            <person name="Castrucci M.R."/>
            <person name="Donatelli I."/>
            <person name="Webster R.G."/>
        </authorList>
    </citation>
    <scope>NUCLEOTIDE SEQUENCE [GENOMIC RNA]</scope>
</reference>
<comment type="function">
    <text evidence="1">Inhibits post-transcriptional processing of cellular pre-mRNA, by binding and inhibiting two cellular proteins that are required for the 3'-end processing of cellular pre-mRNAs: the 30 kDa cleavage and polyadenylation specificity factor/CPSF4 and the poly(A)-binding protein 2/PABPN1. In turn, unprocessed 3' end pre-mRNAs accumulate in the host nucleus and are no longer exported to the cytoplasm. Cellular protein synthesis is thereby shut off very early after virus infection. Viral protein synthesis is not affected by the inhibition of the cellular 3' end processing machinery because the poly(A) tails of viral mRNAs are produced by the viral polymerase through a stuttering mechanism. Prevents the establishment of the cellular antiviral state by inhibiting TRIM25-mediated RIGI ubiquitination, which normally triggers the antiviral transduction signal that leads to the activation of type I IFN genes by transcription factors IRF3 and IRF7. Also binds poly(A) and U6 snRNA. Inhibits the integrated stress response (ISR) in the infected cell by blocking dsRNA binding by EIF2AK2/PKR and further phosphorylation of EIF2S1/EIF-2ALPHA. Stress granule formation is thus inhibited, which allows protein synthesis and viral replication.</text>
</comment>
<comment type="subunit">
    <text evidence="1">Homodimer. Interacts with host TRIM25 (via coiled coil); this interaction specifically inhibits TRIM25 multimerization and TRIM25-mediated RIGI CARD ubiquitination. Interacts with human EIF2AK2/PKR, CPSF4, IVNS1ABP and PABPN1.</text>
</comment>
<comment type="subcellular location">
    <subcellularLocation>
        <location evidence="1">Host nucleus</location>
    </subcellularLocation>
    <subcellularLocation>
        <location evidence="1">Host cytoplasm</location>
    </subcellularLocation>
    <text evidence="1">In uninfected, transfected cells, NS1 is localized in the nucleus. Only in virus infected cells, the nuclear export signal is unveiled, presumably by a viral protein, and a fraction of NS1 is exported in the cytoplasm.</text>
</comment>
<comment type="alternative products">
    <event type="alternative splicing"/>
    <isoform>
        <id>Q9WA92-1</id>
        <name>NS1</name>
        <sequence type="displayed"/>
    </isoform>
    <isoform>
        <id>O09688-1</id>
        <name>NEP</name>
        <name>NS2</name>
        <sequence type="external"/>
    </isoform>
</comment>
<comment type="domain">
    <text evidence="1">The dsRNA-binding region is required for suppression of RNA silencing.</text>
</comment>
<comment type="PTM">
    <text evidence="1">Upon interferon induction, ISGylated via host HERC5; this results in the impairment of NS1 interaction with RNA targets due to its inability to form homodimers and to interact with host EIF2AK2/PKR.</text>
</comment>
<comment type="similarity">
    <text evidence="1">Belongs to the influenza A viruses NS1 family.</text>
</comment>
<gene>
    <name evidence="1" type="primary">NS</name>
</gene>
<keyword id="KW-0025">Alternative splicing</keyword>
<keyword id="KW-1262">Eukaryotic host gene expression shutoff by virus</keyword>
<keyword id="KW-1035">Host cytoplasm</keyword>
<keyword id="KW-1190">Host gene expression shutoff by virus</keyword>
<keyword id="KW-1192">Host mRNA suppression by virus</keyword>
<keyword id="KW-1048">Host nucleus</keyword>
<keyword id="KW-0945">Host-virus interaction</keyword>
<keyword id="KW-1090">Inhibition of host innate immune response by virus</keyword>
<keyword id="KW-1114">Inhibition of host interferon signaling pathway by virus</keyword>
<keyword id="KW-1102">Inhibition of host PKR by virus</keyword>
<keyword id="KW-1103">Inhibition of host pre-mRNA processing by virus</keyword>
<keyword id="KW-1088">Inhibition of host RIG-I by virus</keyword>
<keyword id="KW-1113">Inhibition of host RLR pathway by virus</keyword>
<keyword id="KW-0922">Interferon antiviral system evasion</keyword>
<keyword id="KW-0694">RNA-binding</keyword>
<keyword id="KW-0832">Ubl conjugation</keyword>
<keyword id="KW-0899">Viral immunoevasion</keyword>
<proteinExistence type="inferred from homology"/>
<accession>Q9WA92</accession>
<accession>O09689</accession>
<organismHost>
    <name type="scientific">Aves</name>
    <dbReference type="NCBI Taxonomy" id="8782"/>
</organismHost>
<organismHost>
    <name type="scientific">Equus caballus</name>
    <name type="common">Horse</name>
    <dbReference type="NCBI Taxonomy" id="9796"/>
</organismHost>
<sequence length="230" mass="26078">MDSNTVSSFQVDCFLWHVRKRFADQELGDAPFLDRLRRDQKSLKGRGSTLGLNIETATRAGKQIVEQILEEESDEALKMTIASVPASRYLTDMTLDEISRDWFMLMPKQKVTGSLCIRMDQAIMDKNIILKANFSVIFERLETLILLRAFTEEGAVVGEISPLPSLPGHTNEDVKNAIGVLIGGLKWNDNTVRVSETLQRFAWRSSHENGRPSFPPKQKRKMARTIEPEV</sequence>
<dbReference type="EMBL" id="U49487">
    <property type="protein sequence ID" value="AAB51001.1"/>
    <property type="molecule type" value="Genomic_RNA"/>
</dbReference>
<dbReference type="EMBL" id="M80973">
    <property type="protein sequence ID" value="AAC35583.1"/>
    <property type="molecule type" value="Genomic_RNA"/>
</dbReference>
<dbReference type="SMR" id="Q9WA92"/>
<dbReference type="GO" id="GO:0030430">
    <property type="term" value="C:host cell cytoplasm"/>
    <property type="evidence" value="ECO:0007669"/>
    <property type="project" value="UniProtKB-SubCell"/>
</dbReference>
<dbReference type="GO" id="GO:0042025">
    <property type="term" value="C:host cell nucleus"/>
    <property type="evidence" value="ECO:0007669"/>
    <property type="project" value="UniProtKB-SubCell"/>
</dbReference>
<dbReference type="GO" id="GO:0030291">
    <property type="term" value="F:protein serine/threonine kinase inhibitor activity"/>
    <property type="evidence" value="ECO:0007669"/>
    <property type="project" value="UniProtKB-KW"/>
</dbReference>
<dbReference type="GO" id="GO:0003723">
    <property type="term" value="F:RNA binding"/>
    <property type="evidence" value="ECO:0007669"/>
    <property type="project" value="UniProtKB-KW"/>
</dbReference>
<dbReference type="GO" id="GO:0039540">
    <property type="term" value="P:symbiont-mediated suppression of host cytoplasmic pattern recognition receptor signaling pathway via inhibition of RIG-I activity"/>
    <property type="evidence" value="ECO:0007669"/>
    <property type="project" value="UniProtKB-KW"/>
</dbReference>
<dbReference type="GO" id="GO:0039657">
    <property type="term" value="P:symbiont-mediated suppression of host gene expression"/>
    <property type="evidence" value="ECO:0007669"/>
    <property type="project" value="UniProtKB-KW"/>
</dbReference>
<dbReference type="GO" id="GO:0039524">
    <property type="term" value="P:symbiont-mediated suppression of host mRNA processing"/>
    <property type="evidence" value="ECO:0007669"/>
    <property type="project" value="UniProtKB-KW"/>
</dbReference>
<dbReference type="GO" id="GO:0039580">
    <property type="term" value="P:symbiont-mediated suppression of host PKR/eIFalpha signaling"/>
    <property type="evidence" value="ECO:0007669"/>
    <property type="project" value="UniProtKB-KW"/>
</dbReference>
<dbReference type="GO" id="GO:0039502">
    <property type="term" value="P:symbiont-mediated suppression of host type I interferon-mediated signaling pathway"/>
    <property type="evidence" value="ECO:0007669"/>
    <property type="project" value="UniProtKB-KW"/>
</dbReference>
<dbReference type="FunFam" id="1.10.287.10:FF:000001">
    <property type="entry name" value="Non-structural protein 1"/>
    <property type="match status" value="1"/>
</dbReference>
<dbReference type="FunFam" id="3.30.420.330:FF:000001">
    <property type="entry name" value="Non-structural protein 1"/>
    <property type="match status" value="1"/>
</dbReference>
<dbReference type="Gene3D" id="3.30.420.330">
    <property type="entry name" value="Influenza virus non-structural protein, effector domain"/>
    <property type="match status" value="1"/>
</dbReference>
<dbReference type="Gene3D" id="1.10.287.10">
    <property type="entry name" value="S15/NS1, RNA-binding"/>
    <property type="match status" value="1"/>
</dbReference>
<dbReference type="HAMAP" id="MF_04066">
    <property type="entry name" value="INFV_NS1"/>
    <property type="match status" value="1"/>
</dbReference>
<dbReference type="InterPro" id="IPR004208">
    <property type="entry name" value="NS1"/>
</dbReference>
<dbReference type="InterPro" id="IPR000256">
    <property type="entry name" value="NS1A"/>
</dbReference>
<dbReference type="InterPro" id="IPR038064">
    <property type="entry name" value="NS1A_effect_dom-like_sf"/>
</dbReference>
<dbReference type="InterPro" id="IPR009068">
    <property type="entry name" value="uS15_NS1_RNA-bd_sf"/>
</dbReference>
<dbReference type="Pfam" id="PF00600">
    <property type="entry name" value="Flu_NS1"/>
    <property type="match status" value="1"/>
</dbReference>
<dbReference type="SUPFAM" id="SSF143021">
    <property type="entry name" value="Ns1 effector domain-like"/>
    <property type="match status" value="1"/>
</dbReference>
<dbReference type="SUPFAM" id="SSF47060">
    <property type="entry name" value="S15/NS1 RNA-binding domain"/>
    <property type="match status" value="1"/>
</dbReference>